<feature type="chain" id="PRO_0000119686" description="Glutamate--tRNA ligase">
    <location>
        <begin position="1"/>
        <end position="506"/>
    </location>
</feature>
<feature type="short sequence motif" description="'HIGH' region" evidence="1">
    <location>
        <begin position="9"/>
        <end position="19"/>
    </location>
</feature>
<feature type="short sequence motif" description="'KMSKS' region" evidence="1">
    <location>
        <begin position="251"/>
        <end position="255"/>
    </location>
</feature>
<feature type="binding site" evidence="1">
    <location>
        <position position="254"/>
    </location>
    <ligand>
        <name>ATP</name>
        <dbReference type="ChEBI" id="CHEBI:30616"/>
    </ligand>
</feature>
<keyword id="KW-0030">Aminoacyl-tRNA synthetase</keyword>
<keyword id="KW-0067">ATP-binding</keyword>
<keyword id="KW-0963">Cytoplasm</keyword>
<keyword id="KW-0436">Ligase</keyword>
<keyword id="KW-0547">Nucleotide-binding</keyword>
<keyword id="KW-0648">Protein biosynthesis</keyword>
<keyword id="KW-1185">Reference proteome</keyword>
<sequence>MQVKVRYAPSPTGFQHIGGVRTALFNYLFARSKGGKFVLRIEDTDRTRYSEEYEQNLYDTLEWLGLEWDEGGPKGGPCAPYIQSQRFDIYRKYAQELVDKGFAYYCFCDSERLDRIRKIQTMNKMPPGYDRACRNLTDEEIKAKMDEGIPYVIRLKVPLEGSTKFTDALLGDIEWKNEDINPDQILLKSDGFPTYHLANIVDDHLMGITHVMRAQEWLPSTPMHVIMYKAFGWEPPQFCHLPMVMGNDGQKLSKRHGATSCNEFRNKGYLKEAIINYVAMLGCSYEDGRDMYSLSDLEKLFDIKHLNKAPAVFDYKKLEWFNGQYMREKTDEELFALTWPYIANSGLFGKINEEELKKAGCRFENQTYLKPTQEQKEILMKVMPLVKERLHLLSEITEMVRFLFEEPAVPPAEEIIPKKLDAETTKKVLQKAIEVMPKILGLDDHAGGEVFRAEADAMGIKMGDFMMPVRMTVTGSRISPPLVGSIQILGIEKAIKRIEKAIAERF</sequence>
<evidence type="ECO:0000255" key="1">
    <source>
        <dbReference type="HAMAP-Rule" id="MF_00022"/>
    </source>
</evidence>
<reference key="1">
    <citation type="journal article" date="2004" name="Proc. Natl. Acad. Sci. U.S.A.">
        <title>Comparison of the genome of the oral pathogen Treponema denticola with other spirochete genomes.</title>
        <authorList>
            <person name="Seshadri R."/>
            <person name="Myers G.S.A."/>
            <person name="Tettelin H."/>
            <person name="Eisen J.A."/>
            <person name="Heidelberg J.F."/>
            <person name="Dodson R.J."/>
            <person name="Davidsen T.M."/>
            <person name="DeBoy R.T."/>
            <person name="Fouts D.E."/>
            <person name="Haft D.H."/>
            <person name="Selengut J."/>
            <person name="Ren Q."/>
            <person name="Brinkac L.M."/>
            <person name="Madupu R."/>
            <person name="Kolonay J.F."/>
            <person name="Durkin S.A."/>
            <person name="Daugherty S.C."/>
            <person name="Shetty J."/>
            <person name="Shvartsbeyn A."/>
            <person name="Gebregeorgis E."/>
            <person name="Geer K."/>
            <person name="Tsegaye G."/>
            <person name="Malek J.A."/>
            <person name="Ayodeji B."/>
            <person name="Shatsman S."/>
            <person name="McLeod M.P."/>
            <person name="Smajs D."/>
            <person name="Howell J.K."/>
            <person name="Pal S."/>
            <person name="Amin A."/>
            <person name="Vashisth P."/>
            <person name="McNeill T.Z."/>
            <person name="Xiang Q."/>
            <person name="Sodergren E."/>
            <person name="Baca E."/>
            <person name="Weinstock G.M."/>
            <person name="Norris S.J."/>
            <person name="Fraser C.M."/>
            <person name="Paulsen I.T."/>
        </authorList>
    </citation>
    <scope>NUCLEOTIDE SEQUENCE [LARGE SCALE GENOMIC DNA]</scope>
    <source>
        <strain>ATCC 35405 / DSM 14222 / CIP 103919 / JCM 8153 / KCTC 15104</strain>
    </source>
</reference>
<dbReference type="EC" id="6.1.1.17" evidence="1"/>
<dbReference type="EMBL" id="AE017226">
    <property type="protein sequence ID" value="AAS10701.1"/>
    <property type="molecule type" value="Genomic_DNA"/>
</dbReference>
<dbReference type="RefSeq" id="NP_970820.1">
    <property type="nucleotide sequence ID" value="NC_002967.9"/>
</dbReference>
<dbReference type="RefSeq" id="WP_002681104.1">
    <property type="nucleotide sequence ID" value="NC_002967.9"/>
</dbReference>
<dbReference type="SMR" id="Q73R87"/>
<dbReference type="STRING" id="243275.TDE_0204"/>
<dbReference type="PaxDb" id="243275-TDE_0204"/>
<dbReference type="GeneID" id="2739810"/>
<dbReference type="KEGG" id="tde:TDE_0204"/>
<dbReference type="PATRIC" id="fig|243275.7.peg.198"/>
<dbReference type="eggNOG" id="COG0008">
    <property type="taxonomic scope" value="Bacteria"/>
</dbReference>
<dbReference type="HOGENOM" id="CLU_015768_6_3_12"/>
<dbReference type="OrthoDB" id="9807503at2"/>
<dbReference type="Proteomes" id="UP000008212">
    <property type="component" value="Chromosome"/>
</dbReference>
<dbReference type="GO" id="GO:0005737">
    <property type="term" value="C:cytoplasm"/>
    <property type="evidence" value="ECO:0007669"/>
    <property type="project" value="UniProtKB-SubCell"/>
</dbReference>
<dbReference type="GO" id="GO:0005524">
    <property type="term" value="F:ATP binding"/>
    <property type="evidence" value="ECO:0007669"/>
    <property type="project" value="UniProtKB-UniRule"/>
</dbReference>
<dbReference type="GO" id="GO:0004818">
    <property type="term" value="F:glutamate-tRNA ligase activity"/>
    <property type="evidence" value="ECO:0007669"/>
    <property type="project" value="UniProtKB-UniRule"/>
</dbReference>
<dbReference type="GO" id="GO:0000049">
    <property type="term" value="F:tRNA binding"/>
    <property type="evidence" value="ECO:0007669"/>
    <property type="project" value="InterPro"/>
</dbReference>
<dbReference type="GO" id="GO:0008270">
    <property type="term" value="F:zinc ion binding"/>
    <property type="evidence" value="ECO:0007669"/>
    <property type="project" value="InterPro"/>
</dbReference>
<dbReference type="GO" id="GO:0006424">
    <property type="term" value="P:glutamyl-tRNA aminoacylation"/>
    <property type="evidence" value="ECO:0007669"/>
    <property type="project" value="UniProtKB-UniRule"/>
</dbReference>
<dbReference type="CDD" id="cd00808">
    <property type="entry name" value="GluRS_core"/>
    <property type="match status" value="1"/>
</dbReference>
<dbReference type="FunFam" id="3.40.50.620:FF:000045">
    <property type="entry name" value="Glutamate--tRNA ligase, mitochondrial"/>
    <property type="match status" value="1"/>
</dbReference>
<dbReference type="Gene3D" id="1.10.10.350">
    <property type="match status" value="1"/>
</dbReference>
<dbReference type="Gene3D" id="3.40.50.620">
    <property type="entry name" value="HUPs"/>
    <property type="match status" value="1"/>
</dbReference>
<dbReference type="HAMAP" id="MF_00022">
    <property type="entry name" value="Glu_tRNA_synth_type1"/>
    <property type="match status" value="1"/>
</dbReference>
<dbReference type="InterPro" id="IPR045462">
    <property type="entry name" value="aa-tRNA-synth_I_cd-bd"/>
</dbReference>
<dbReference type="InterPro" id="IPR020751">
    <property type="entry name" value="aa-tRNA-synth_I_codon-bd_sub2"/>
</dbReference>
<dbReference type="InterPro" id="IPR008925">
    <property type="entry name" value="aa_tRNA-synth_I_cd-bd_sf"/>
</dbReference>
<dbReference type="InterPro" id="IPR004527">
    <property type="entry name" value="Glu-tRNA-ligase_bac/mito"/>
</dbReference>
<dbReference type="InterPro" id="IPR000924">
    <property type="entry name" value="Glu/Gln-tRNA-synth"/>
</dbReference>
<dbReference type="InterPro" id="IPR020058">
    <property type="entry name" value="Glu/Gln-tRNA-synth_Ib_cat-dom"/>
</dbReference>
<dbReference type="InterPro" id="IPR049940">
    <property type="entry name" value="GluQ/Sye"/>
</dbReference>
<dbReference type="InterPro" id="IPR033910">
    <property type="entry name" value="GluRS_core"/>
</dbReference>
<dbReference type="InterPro" id="IPR014729">
    <property type="entry name" value="Rossmann-like_a/b/a_fold"/>
</dbReference>
<dbReference type="NCBIfam" id="TIGR00464">
    <property type="entry name" value="gltX_bact"/>
    <property type="match status" value="1"/>
</dbReference>
<dbReference type="PANTHER" id="PTHR43311">
    <property type="entry name" value="GLUTAMATE--TRNA LIGASE"/>
    <property type="match status" value="1"/>
</dbReference>
<dbReference type="PANTHER" id="PTHR43311:SF2">
    <property type="entry name" value="GLUTAMATE--TRNA LIGASE, MITOCHONDRIAL-RELATED"/>
    <property type="match status" value="1"/>
</dbReference>
<dbReference type="Pfam" id="PF19269">
    <property type="entry name" value="Anticodon_2"/>
    <property type="match status" value="1"/>
</dbReference>
<dbReference type="Pfam" id="PF00749">
    <property type="entry name" value="tRNA-synt_1c"/>
    <property type="match status" value="1"/>
</dbReference>
<dbReference type="PRINTS" id="PR00987">
    <property type="entry name" value="TRNASYNTHGLU"/>
</dbReference>
<dbReference type="SUPFAM" id="SSF48163">
    <property type="entry name" value="An anticodon-binding domain of class I aminoacyl-tRNA synthetases"/>
    <property type="match status" value="1"/>
</dbReference>
<dbReference type="SUPFAM" id="SSF52374">
    <property type="entry name" value="Nucleotidylyl transferase"/>
    <property type="match status" value="1"/>
</dbReference>
<accession>Q73R87</accession>
<name>SYE_TREDE</name>
<comment type="function">
    <text evidence="1">Catalyzes the attachment of glutamate to tRNA(Glu) in a two-step reaction: glutamate is first activated by ATP to form Glu-AMP and then transferred to the acceptor end of tRNA(Glu).</text>
</comment>
<comment type="catalytic activity">
    <reaction evidence="1">
        <text>tRNA(Glu) + L-glutamate + ATP = L-glutamyl-tRNA(Glu) + AMP + diphosphate</text>
        <dbReference type="Rhea" id="RHEA:23540"/>
        <dbReference type="Rhea" id="RHEA-COMP:9663"/>
        <dbReference type="Rhea" id="RHEA-COMP:9680"/>
        <dbReference type="ChEBI" id="CHEBI:29985"/>
        <dbReference type="ChEBI" id="CHEBI:30616"/>
        <dbReference type="ChEBI" id="CHEBI:33019"/>
        <dbReference type="ChEBI" id="CHEBI:78442"/>
        <dbReference type="ChEBI" id="CHEBI:78520"/>
        <dbReference type="ChEBI" id="CHEBI:456215"/>
        <dbReference type="EC" id="6.1.1.17"/>
    </reaction>
</comment>
<comment type="subunit">
    <text evidence="1">Monomer.</text>
</comment>
<comment type="subcellular location">
    <subcellularLocation>
        <location evidence="1">Cytoplasm</location>
    </subcellularLocation>
</comment>
<comment type="similarity">
    <text evidence="1">Belongs to the class-I aminoacyl-tRNA synthetase family. Glutamate--tRNA ligase type 1 subfamily.</text>
</comment>
<organism>
    <name type="scientific">Treponema denticola (strain ATCC 35405 / DSM 14222 / CIP 103919 / JCM 8153 / KCTC 15104)</name>
    <dbReference type="NCBI Taxonomy" id="243275"/>
    <lineage>
        <taxon>Bacteria</taxon>
        <taxon>Pseudomonadati</taxon>
        <taxon>Spirochaetota</taxon>
        <taxon>Spirochaetia</taxon>
        <taxon>Spirochaetales</taxon>
        <taxon>Treponemataceae</taxon>
        <taxon>Treponema</taxon>
    </lineage>
</organism>
<protein>
    <recommendedName>
        <fullName evidence="1">Glutamate--tRNA ligase</fullName>
        <ecNumber evidence="1">6.1.1.17</ecNumber>
    </recommendedName>
    <alternativeName>
        <fullName evidence="1">Glutamyl-tRNA synthetase</fullName>
        <shortName evidence="1">GluRS</shortName>
    </alternativeName>
</protein>
<proteinExistence type="inferred from homology"/>
<gene>
    <name evidence="1" type="primary">gltX</name>
    <name type="ordered locus">TDE_0204</name>
</gene>